<gene>
    <name evidence="1" type="primary">atpB</name>
    <name type="ordered locus">SeAg_B4096</name>
</gene>
<keyword id="KW-0066">ATP synthesis</keyword>
<keyword id="KW-0997">Cell inner membrane</keyword>
<keyword id="KW-1003">Cell membrane</keyword>
<keyword id="KW-0138">CF(0)</keyword>
<keyword id="KW-0375">Hydrogen ion transport</keyword>
<keyword id="KW-0406">Ion transport</keyword>
<keyword id="KW-0472">Membrane</keyword>
<keyword id="KW-0812">Transmembrane</keyword>
<keyword id="KW-1133">Transmembrane helix</keyword>
<keyword id="KW-0813">Transport</keyword>
<sequence length="271" mass="30417">MASENMTPQEYIGHHLNNLQLDLRTFSLVDPQNPPATFWTLNIDSMFFSVVLGLLFLVMFRSVAKKATSGVPGKFQTAIELIVGFVHGSVKDMYHGKSKLIAPLALTIFVWVFLMNLMDLLPIDLLPYIAEHWLGLPATRVVPSADVNITLSMALGVFILILFYSIKMKGIGGFAKELTLQPFNHWAFIPVNLILEGVSLLSKPVSLGLRLFGNMYAGELIFILIAGLLPWWSQWILNVPWAIFHILIITLQAFIFMVLTIVYLSMASEEH</sequence>
<proteinExistence type="inferred from homology"/>
<evidence type="ECO:0000255" key="1">
    <source>
        <dbReference type="HAMAP-Rule" id="MF_01393"/>
    </source>
</evidence>
<organism>
    <name type="scientific">Salmonella agona (strain SL483)</name>
    <dbReference type="NCBI Taxonomy" id="454166"/>
    <lineage>
        <taxon>Bacteria</taxon>
        <taxon>Pseudomonadati</taxon>
        <taxon>Pseudomonadota</taxon>
        <taxon>Gammaproteobacteria</taxon>
        <taxon>Enterobacterales</taxon>
        <taxon>Enterobacteriaceae</taxon>
        <taxon>Salmonella</taxon>
    </lineage>
</organism>
<reference key="1">
    <citation type="journal article" date="2011" name="J. Bacteriol.">
        <title>Comparative genomics of 28 Salmonella enterica isolates: evidence for CRISPR-mediated adaptive sublineage evolution.</title>
        <authorList>
            <person name="Fricke W.F."/>
            <person name="Mammel M.K."/>
            <person name="McDermott P.F."/>
            <person name="Tartera C."/>
            <person name="White D.G."/>
            <person name="Leclerc J.E."/>
            <person name="Ravel J."/>
            <person name="Cebula T.A."/>
        </authorList>
    </citation>
    <scope>NUCLEOTIDE SEQUENCE [LARGE SCALE GENOMIC DNA]</scope>
    <source>
        <strain>SL483</strain>
    </source>
</reference>
<name>ATP6_SALA4</name>
<feature type="chain" id="PRO_0000362432" description="ATP synthase subunit a">
    <location>
        <begin position="1"/>
        <end position="271"/>
    </location>
</feature>
<feature type="transmembrane region" description="Helical" evidence="1">
    <location>
        <begin position="38"/>
        <end position="58"/>
    </location>
</feature>
<feature type="transmembrane region" description="Helical" evidence="1">
    <location>
        <begin position="100"/>
        <end position="120"/>
    </location>
</feature>
<feature type="transmembrane region" description="Helical" evidence="1">
    <location>
        <begin position="146"/>
        <end position="166"/>
    </location>
</feature>
<feature type="transmembrane region" description="Helical" evidence="1">
    <location>
        <begin position="220"/>
        <end position="240"/>
    </location>
</feature>
<feature type="transmembrane region" description="Helical" evidence="1">
    <location>
        <begin position="242"/>
        <end position="262"/>
    </location>
</feature>
<comment type="function">
    <text evidence="1">Key component of the proton channel; it plays a direct role in the translocation of protons across the membrane.</text>
</comment>
<comment type="subunit">
    <text evidence="1">F-type ATPases have 2 components, CF(1) - the catalytic core - and CF(0) - the membrane proton channel. CF(1) has five subunits: alpha(3), beta(3), gamma(1), delta(1), epsilon(1). CF(0) has three main subunits: a(1), b(2) and c(9-12). The alpha and beta chains form an alternating ring which encloses part of the gamma chain. CF(1) is attached to CF(0) by a central stalk formed by the gamma and epsilon chains, while a peripheral stalk is formed by the delta and b chains.</text>
</comment>
<comment type="subcellular location">
    <subcellularLocation>
        <location evidence="1">Cell inner membrane</location>
        <topology evidence="1">Multi-pass membrane protein</topology>
    </subcellularLocation>
</comment>
<comment type="similarity">
    <text evidence="1">Belongs to the ATPase A chain family.</text>
</comment>
<accession>B5EZ02</accession>
<protein>
    <recommendedName>
        <fullName evidence="1">ATP synthase subunit a</fullName>
    </recommendedName>
    <alternativeName>
        <fullName evidence="1">ATP synthase F0 sector subunit a</fullName>
    </alternativeName>
    <alternativeName>
        <fullName evidence="1">F-ATPase subunit 6</fullName>
    </alternativeName>
</protein>
<dbReference type="EMBL" id="CP001138">
    <property type="protein sequence ID" value="ACH48701.1"/>
    <property type="molecule type" value="Genomic_DNA"/>
</dbReference>
<dbReference type="RefSeq" id="WP_000135632.1">
    <property type="nucleotide sequence ID" value="NC_011149.1"/>
</dbReference>
<dbReference type="SMR" id="B5EZ02"/>
<dbReference type="KEGG" id="sea:SeAg_B4096"/>
<dbReference type="HOGENOM" id="CLU_041018_1_0_6"/>
<dbReference type="Proteomes" id="UP000008819">
    <property type="component" value="Chromosome"/>
</dbReference>
<dbReference type="GO" id="GO:0005886">
    <property type="term" value="C:plasma membrane"/>
    <property type="evidence" value="ECO:0007669"/>
    <property type="project" value="UniProtKB-SubCell"/>
</dbReference>
<dbReference type="GO" id="GO:0045259">
    <property type="term" value="C:proton-transporting ATP synthase complex"/>
    <property type="evidence" value="ECO:0007669"/>
    <property type="project" value="UniProtKB-KW"/>
</dbReference>
<dbReference type="GO" id="GO:0046933">
    <property type="term" value="F:proton-transporting ATP synthase activity, rotational mechanism"/>
    <property type="evidence" value="ECO:0007669"/>
    <property type="project" value="UniProtKB-UniRule"/>
</dbReference>
<dbReference type="GO" id="GO:0042777">
    <property type="term" value="P:proton motive force-driven plasma membrane ATP synthesis"/>
    <property type="evidence" value="ECO:0007669"/>
    <property type="project" value="TreeGrafter"/>
</dbReference>
<dbReference type="CDD" id="cd00310">
    <property type="entry name" value="ATP-synt_Fo_a_6"/>
    <property type="match status" value="1"/>
</dbReference>
<dbReference type="FunFam" id="1.20.120.220:FF:000002">
    <property type="entry name" value="ATP synthase subunit a"/>
    <property type="match status" value="1"/>
</dbReference>
<dbReference type="Gene3D" id="1.20.120.220">
    <property type="entry name" value="ATP synthase, F0 complex, subunit A"/>
    <property type="match status" value="1"/>
</dbReference>
<dbReference type="HAMAP" id="MF_01393">
    <property type="entry name" value="ATP_synth_a_bact"/>
    <property type="match status" value="1"/>
</dbReference>
<dbReference type="InterPro" id="IPR045082">
    <property type="entry name" value="ATP_syn_F0_a_bact/chloroplast"/>
</dbReference>
<dbReference type="InterPro" id="IPR000568">
    <property type="entry name" value="ATP_synth_F0_asu"/>
</dbReference>
<dbReference type="InterPro" id="IPR023011">
    <property type="entry name" value="ATP_synth_F0_asu_AS"/>
</dbReference>
<dbReference type="InterPro" id="IPR035908">
    <property type="entry name" value="F0_ATP_A_sf"/>
</dbReference>
<dbReference type="NCBIfam" id="TIGR01131">
    <property type="entry name" value="ATP_synt_6_or_A"/>
    <property type="match status" value="1"/>
</dbReference>
<dbReference type="NCBIfam" id="NF004477">
    <property type="entry name" value="PRK05815.1-1"/>
    <property type="match status" value="1"/>
</dbReference>
<dbReference type="PANTHER" id="PTHR42823">
    <property type="entry name" value="ATP SYNTHASE SUBUNIT A, CHLOROPLASTIC"/>
    <property type="match status" value="1"/>
</dbReference>
<dbReference type="PANTHER" id="PTHR42823:SF3">
    <property type="entry name" value="ATP SYNTHASE SUBUNIT A, CHLOROPLASTIC"/>
    <property type="match status" value="1"/>
</dbReference>
<dbReference type="Pfam" id="PF00119">
    <property type="entry name" value="ATP-synt_A"/>
    <property type="match status" value="1"/>
</dbReference>
<dbReference type="PRINTS" id="PR00123">
    <property type="entry name" value="ATPASEA"/>
</dbReference>
<dbReference type="SUPFAM" id="SSF81336">
    <property type="entry name" value="F1F0 ATP synthase subunit A"/>
    <property type="match status" value="1"/>
</dbReference>
<dbReference type="PROSITE" id="PS00449">
    <property type="entry name" value="ATPASE_A"/>
    <property type="match status" value="1"/>
</dbReference>